<organism>
    <name type="scientific">Homo sapiens</name>
    <name type="common">Human</name>
    <dbReference type="NCBI Taxonomy" id="9606"/>
    <lineage>
        <taxon>Eukaryota</taxon>
        <taxon>Metazoa</taxon>
        <taxon>Chordata</taxon>
        <taxon>Craniata</taxon>
        <taxon>Vertebrata</taxon>
        <taxon>Euteleostomi</taxon>
        <taxon>Mammalia</taxon>
        <taxon>Eutheria</taxon>
        <taxon>Euarchontoglires</taxon>
        <taxon>Primates</taxon>
        <taxon>Haplorrhini</taxon>
        <taxon>Catarrhini</taxon>
        <taxon>Hominidae</taxon>
        <taxon>Homo</taxon>
    </lineage>
</organism>
<gene>
    <name type="primary">SLC35A3</name>
</gene>
<comment type="function">
    <text evidence="2 4 8 9">Transports diphosphate-N-acetylglucosamine (UDP-GlcNAc) from the cytosol into the lumen of the Golgi apparatus, functioning as an antiporter that exchanges UDP-N-acetyl-alpha-D-glucosamine for UMP (PubMed:10393322). May supply UDP-GlcNAc as substrate for Golgi-resident glycosyltransferases that generate highly branched, multiantennary complex N-glycans and keratan sulfate (PubMed:23766508, PubMed:34981577). However, the exact role of SLC35A3 still needs to be elucidated, it could be a member of a catalytically more efficient multiprotein complex rather than function independently as a single transporter (PubMed:32938718).</text>
</comment>
<comment type="catalytic activity">
    <reaction evidence="2">
        <text>UMP(out) + UDP-N-acetyl-alpha-D-glucosamine(in) = UMP(in) + UDP-N-acetyl-alpha-D-glucosamine(out)</text>
        <dbReference type="Rhea" id="RHEA:72695"/>
        <dbReference type="ChEBI" id="CHEBI:57705"/>
        <dbReference type="ChEBI" id="CHEBI:57865"/>
    </reaction>
</comment>
<comment type="subunit">
    <text evidence="3 6 9">Interacts with SLC35A2; the interaction is reduced in the presence of SLC35A4 (PubMed:23089177, PubMed:28167211). Found in a complex with SLC35A2 and SLC35A4 (PubMed:28167211). Interacts with MGAT4B (PubMed:34981577).</text>
</comment>
<comment type="interaction">
    <interactant intactId="EBI-3917581">
        <id>Q9Y2D2</id>
    </interactant>
    <interactant intactId="EBI-8101118">
        <id>P78381-1</id>
        <label>SLC35A2</label>
    </interactant>
    <organismsDiffer>false</organismsDiffer>
    <experiments>3</experiments>
</comment>
<comment type="subcellular location">
    <subcellularLocation>
        <location evidence="2 4 6">Golgi apparatus membrane</location>
        <topology evidence="1">Multi-pass membrane protein</topology>
    </subcellularLocation>
</comment>
<comment type="alternative products">
    <event type="alternative splicing"/>
    <isoform>
        <id>Q9Y2D2-1</id>
        <name>1</name>
        <sequence type="displayed"/>
    </isoform>
    <isoform>
        <id>Q9Y2D2-2</id>
        <name>2</name>
        <sequence type="described" ref="VSP_012786"/>
    </isoform>
    <isoform>
        <id>Q9Y2D2-3</id>
        <name>3</name>
        <sequence type="described" ref="VSP_054232 VSP_054233"/>
    </isoform>
</comment>
<comment type="PTM">
    <text evidence="9">O-Glcnacylation regulates the stability of SLC35A3 and the specific complex formation with MGAT4B.</text>
</comment>
<comment type="disease" evidence="5 7">
    <disease id="DI-03977">
        <name>Arthrogryposis, impaired intellectual development, and seizures</name>
        <acronym>AMRS</acronym>
        <description>A disease characterized by arthrogryposis, intellectual disability, autism spectrum disorder, and epilepsy. Additional features include limb malformations, distal joint involvement, microcephaly, retromicrognathia, and general muscle hypotonia.</description>
        <dbReference type="MIM" id="615553"/>
    </disease>
    <text>The disease is caused by variants affecting the gene represented in this entry. In Golgi vesicles isolated from patient fibroblasts the transport of the respective nucleotide sugar is significantly reduced causing a massive decrease in the content of cell surface expressed highly branched N-glycans and a concomitant sharp increase of lower branched glycoforms.</text>
</comment>
<comment type="similarity">
    <text evidence="12">Belongs to the nucleotide-sugar transporter family. SLC35A subfamily.</text>
</comment>
<dbReference type="EMBL" id="AB021981">
    <property type="protein sequence ID" value="BAA77841.1"/>
    <property type="molecule type" value="mRNA"/>
</dbReference>
<dbReference type="EMBL" id="AK290573">
    <property type="protein sequence ID" value="BAF83262.1"/>
    <property type="molecule type" value="mRNA"/>
</dbReference>
<dbReference type="EMBL" id="CR749816">
    <property type="protein sequence ID" value="CAH18676.1"/>
    <property type="molecule type" value="mRNA"/>
</dbReference>
<dbReference type="EMBL" id="AC118553">
    <property type="status" value="NOT_ANNOTATED_CDS"/>
    <property type="molecule type" value="Genomic_DNA"/>
</dbReference>
<dbReference type="EMBL" id="CH471097">
    <property type="protein sequence ID" value="EAW72977.1"/>
    <property type="molecule type" value="Genomic_DNA"/>
</dbReference>
<dbReference type="EMBL" id="CH471097">
    <property type="protein sequence ID" value="EAW72978.1"/>
    <property type="molecule type" value="Genomic_DNA"/>
</dbReference>
<dbReference type="EMBL" id="CH471097">
    <property type="protein sequence ID" value="EAW72979.1"/>
    <property type="molecule type" value="Genomic_DNA"/>
</dbReference>
<dbReference type="EMBL" id="BC005136">
    <property type="protein sequence ID" value="AAH05136.1"/>
    <property type="molecule type" value="mRNA"/>
</dbReference>
<dbReference type="CCDS" id="CCDS60204.1">
    <molecule id="Q9Y2D2-2"/>
</dbReference>
<dbReference type="CCDS" id="CCDS60205.1">
    <molecule id="Q9Y2D2-3"/>
</dbReference>
<dbReference type="CCDS" id="CCDS762.1">
    <molecule id="Q9Y2D2-1"/>
</dbReference>
<dbReference type="RefSeq" id="NP_001258613.1">
    <molecule id="Q9Y2D2-3"/>
    <property type="nucleotide sequence ID" value="NM_001271684.2"/>
</dbReference>
<dbReference type="RefSeq" id="NP_001258614.1">
    <molecule id="Q9Y2D2-2"/>
    <property type="nucleotide sequence ID" value="NM_001271685.2"/>
</dbReference>
<dbReference type="RefSeq" id="NP_036375.1">
    <molecule id="Q9Y2D2-1"/>
    <property type="nucleotide sequence ID" value="NM_012243.3"/>
</dbReference>
<dbReference type="RefSeq" id="XP_005270748.1">
    <molecule id="Q9Y2D2-1"/>
    <property type="nucleotide sequence ID" value="XM_005270691.6"/>
</dbReference>
<dbReference type="RefSeq" id="XP_011539438.1">
    <property type="nucleotide sequence ID" value="XM_011541136.2"/>
</dbReference>
<dbReference type="RefSeq" id="XP_054191666.1">
    <molecule id="Q9Y2D2-1"/>
    <property type="nucleotide sequence ID" value="XM_054335691.1"/>
</dbReference>
<dbReference type="SMR" id="Q9Y2D2"/>
<dbReference type="BioGRID" id="117010">
    <property type="interactions" value="11"/>
</dbReference>
<dbReference type="CORUM" id="Q9Y2D2"/>
<dbReference type="FunCoup" id="Q9Y2D2">
    <property type="interactions" value="910"/>
</dbReference>
<dbReference type="IntAct" id="Q9Y2D2">
    <property type="interactions" value="5"/>
</dbReference>
<dbReference type="MINT" id="Q9Y2D2"/>
<dbReference type="STRING" id="9606.ENSP00000359172"/>
<dbReference type="TCDB" id="2.A.7.12.7">
    <property type="family name" value="the drug/metabolite transporter (dmt) superfamily"/>
</dbReference>
<dbReference type="GlyGen" id="Q9Y2D2">
    <property type="glycosylation" value="1 site, 1 O-linked glycan (1 site)"/>
</dbReference>
<dbReference type="iPTMnet" id="Q9Y2D2"/>
<dbReference type="PhosphoSitePlus" id="Q9Y2D2"/>
<dbReference type="SwissPalm" id="Q9Y2D2"/>
<dbReference type="BioMuta" id="SLC35A3"/>
<dbReference type="DMDM" id="9087207"/>
<dbReference type="jPOST" id="Q9Y2D2"/>
<dbReference type="MassIVE" id="Q9Y2D2"/>
<dbReference type="PaxDb" id="9606-ENSP00000359172"/>
<dbReference type="PeptideAtlas" id="Q9Y2D2"/>
<dbReference type="ProteomicsDB" id="78874"/>
<dbReference type="ProteomicsDB" id="85734">
    <molecule id="Q9Y2D2-1"/>
</dbReference>
<dbReference type="ProteomicsDB" id="85735">
    <molecule id="Q9Y2D2-2"/>
</dbReference>
<dbReference type="Pumba" id="Q9Y2D2"/>
<dbReference type="TopDownProteomics" id="Q9Y2D2-1">
    <molecule id="Q9Y2D2-1"/>
</dbReference>
<dbReference type="Antibodypedia" id="19975">
    <property type="antibodies" value="58 antibodies from 19 providers"/>
</dbReference>
<dbReference type="DNASU" id="23443"/>
<dbReference type="Ensembl" id="ENST00000370153.6">
    <molecule id="Q9Y2D2-2"/>
    <property type="protein sequence ID" value="ENSP00000359172.1"/>
    <property type="gene ID" value="ENSG00000117620.15"/>
</dbReference>
<dbReference type="Ensembl" id="ENST00000427993.7">
    <molecule id="Q9Y2D2-1"/>
    <property type="protein sequence ID" value="ENSP00000414947.2"/>
    <property type="gene ID" value="ENSG00000117620.15"/>
</dbReference>
<dbReference type="Ensembl" id="ENST00000465289.6">
    <molecule id="Q9Y2D2-1"/>
    <property type="protein sequence ID" value="ENSP00000418527.2"/>
    <property type="gene ID" value="ENSG00000117620.15"/>
</dbReference>
<dbReference type="Ensembl" id="ENST00000533028.8">
    <molecule id="Q9Y2D2-1"/>
    <property type="protein sequence ID" value="ENSP00000433849.1"/>
    <property type="gene ID" value="ENSG00000117620.15"/>
</dbReference>
<dbReference type="Ensembl" id="ENST00000638336.1">
    <molecule id="Q9Y2D2-3"/>
    <property type="protein sequence ID" value="ENSP00000491145.1"/>
    <property type="gene ID" value="ENSG00000117620.15"/>
</dbReference>
<dbReference type="GeneID" id="23443"/>
<dbReference type="KEGG" id="hsa:23443"/>
<dbReference type="MANE-Select" id="ENST00000533028.8">
    <property type="protein sequence ID" value="ENSP00000433849.1"/>
    <property type="RefSeq nucleotide sequence ID" value="NM_012243.3"/>
    <property type="RefSeq protein sequence ID" value="NP_036375.1"/>
</dbReference>
<dbReference type="UCSC" id="uc001dsp.3">
    <molecule id="Q9Y2D2-1"/>
    <property type="organism name" value="human"/>
</dbReference>
<dbReference type="AGR" id="HGNC:11023"/>
<dbReference type="CTD" id="23443"/>
<dbReference type="DisGeNET" id="23443"/>
<dbReference type="GeneCards" id="SLC35A3"/>
<dbReference type="HGNC" id="HGNC:11023">
    <property type="gene designation" value="SLC35A3"/>
</dbReference>
<dbReference type="HPA" id="ENSG00000117620">
    <property type="expression patterns" value="Low tissue specificity"/>
</dbReference>
<dbReference type="MalaCards" id="SLC35A3"/>
<dbReference type="MIM" id="605632">
    <property type="type" value="gene"/>
</dbReference>
<dbReference type="MIM" id="615553">
    <property type="type" value="phenotype"/>
</dbReference>
<dbReference type="neXtProt" id="NX_Q9Y2D2"/>
<dbReference type="OpenTargets" id="ENSG00000117620"/>
<dbReference type="Orphanet" id="370943">
    <property type="disease" value="Autism spectrum disorder-epilepsy-arthrogryposis syndrome"/>
</dbReference>
<dbReference type="PharmGKB" id="PA35891"/>
<dbReference type="VEuPathDB" id="HostDB:ENSG00000117620"/>
<dbReference type="eggNOG" id="KOG2234">
    <property type="taxonomic scope" value="Eukaryota"/>
</dbReference>
<dbReference type="GeneTree" id="ENSGT00950000182827"/>
<dbReference type="HOGENOM" id="CLU_024645_1_0_1"/>
<dbReference type="InParanoid" id="Q9Y2D2"/>
<dbReference type="OMA" id="AIMYVIQ"/>
<dbReference type="OrthoDB" id="408493at2759"/>
<dbReference type="PAN-GO" id="Q9Y2D2">
    <property type="GO annotations" value="2 GO annotations based on evolutionary models"/>
</dbReference>
<dbReference type="PhylomeDB" id="Q9Y2D2"/>
<dbReference type="TreeFam" id="TF315345"/>
<dbReference type="PathwayCommons" id="Q9Y2D2"/>
<dbReference type="Reactome" id="R-HSA-5619083">
    <property type="pathway name" value="Defective SLC35A3 causes arthrogryposis, mental retardation, and seizures (AMRS)"/>
</dbReference>
<dbReference type="Reactome" id="R-HSA-727802">
    <property type="pathway name" value="Transport of nucleotide sugars"/>
</dbReference>
<dbReference type="SignaLink" id="Q9Y2D2"/>
<dbReference type="BioGRID-ORCS" id="23443">
    <property type="hits" value="32 hits in 1148 CRISPR screens"/>
</dbReference>
<dbReference type="ChiTaRS" id="SLC35A3">
    <property type="organism name" value="human"/>
</dbReference>
<dbReference type="GenomeRNAi" id="23443"/>
<dbReference type="Pharos" id="Q9Y2D2">
    <property type="development level" value="Tbio"/>
</dbReference>
<dbReference type="PRO" id="PR:Q9Y2D2"/>
<dbReference type="Proteomes" id="UP000005640">
    <property type="component" value="Chromosome 1"/>
</dbReference>
<dbReference type="RNAct" id="Q9Y2D2">
    <property type="molecule type" value="protein"/>
</dbReference>
<dbReference type="Bgee" id="ENSG00000117620">
    <property type="expression patterns" value="Expressed in mucosa of sigmoid colon and 201 other cell types or tissues"/>
</dbReference>
<dbReference type="ExpressionAtlas" id="Q9Y2D2">
    <property type="expression patterns" value="baseline and differential"/>
</dbReference>
<dbReference type="GO" id="GO:0005794">
    <property type="term" value="C:Golgi apparatus"/>
    <property type="evidence" value="ECO:0000304"/>
    <property type="project" value="ProtInc"/>
</dbReference>
<dbReference type="GO" id="GO:0000139">
    <property type="term" value="C:Golgi membrane"/>
    <property type="evidence" value="ECO:0000314"/>
    <property type="project" value="UniProtKB"/>
</dbReference>
<dbReference type="GO" id="GO:0015297">
    <property type="term" value="F:antiporter activity"/>
    <property type="evidence" value="ECO:0007669"/>
    <property type="project" value="UniProtKB-KW"/>
</dbReference>
<dbReference type="GO" id="GO:0005459">
    <property type="term" value="F:UDP-galactose transmembrane transporter activity"/>
    <property type="evidence" value="ECO:0000318"/>
    <property type="project" value="GO_Central"/>
</dbReference>
<dbReference type="GO" id="GO:0005462">
    <property type="term" value="F:UDP-N-acetylglucosamine transmembrane transporter activity"/>
    <property type="evidence" value="ECO:0000304"/>
    <property type="project" value="Reactome"/>
</dbReference>
<dbReference type="GO" id="GO:0055085">
    <property type="term" value="P:transmembrane transport"/>
    <property type="evidence" value="ECO:0000318"/>
    <property type="project" value="GO_Central"/>
</dbReference>
<dbReference type="GO" id="GO:0006047">
    <property type="term" value="P:UDP-N-acetylglucosamine metabolic process"/>
    <property type="evidence" value="ECO:0000304"/>
    <property type="project" value="ProtInc"/>
</dbReference>
<dbReference type="GO" id="GO:1990569">
    <property type="term" value="P:UDP-N-acetylglucosamine transmembrane transport"/>
    <property type="evidence" value="ECO:0000315"/>
    <property type="project" value="UniProtKB"/>
</dbReference>
<dbReference type="InterPro" id="IPR007271">
    <property type="entry name" value="Nuc_sug_transpt"/>
</dbReference>
<dbReference type="NCBIfam" id="TIGR00803">
    <property type="entry name" value="nst"/>
    <property type="match status" value="1"/>
</dbReference>
<dbReference type="PANTHER" id="PTHR10231">
    <property type="entry name" value="NUCLEOTIDE-SUGAR TRANSMEMBRANE TRANSPORTER"/>
    <property type="match status" value="1"/>
</dbReference>
<dbReference type="Pfam" id="PF04142">
    <property type="entry name" value="Nuc_sug_transp"/>
    <property type="match status" value="1"/>
</dbReference>
<dbReference type="PIRSF" id="PIRSF005799">
    <property type="entry name" value="UDP-gal_transpt"/>
    <property type="match status" value="1"/>
</dbReference>
<dbReference type="SUPFAM" id="SSF103481">
    <property type="entry name" value="Multidrug resistance efflux transporter EmrE"/>
    <property type="match status" value="1"/>
</dbReference>
<sequence length="325" mass="35985">MFANLKYVSLGILVFQTTSLVLTMRYSRTLKEEGPRYLSSTAVVVAELLKIMACILLVYKDSKCSLRALNRVLHDEILNKPMETLKLAIPSGIYTLQNNLLYVALSNLDAATYQVTYQLKILTTALFSVSMLSKKLGVYQWLSLVILMTGVAFVQWPSDSQLDSKELSAGSQFVGLMAVLTACFSSGFAGVYFEKILKETKQSVWIRNIQLGFFGSIFGLMGVYIYDGELVSKNGFFQGYNRLTWIVVVLQALGGLVIAAVIKYADNILKGFATSLSIILSTLISYFWLQDFVPTSVFFLGAILVITATFLYGYDPKPAGNPTKA</sequence>
<name>S35A3_HUMAN</name>
<feature type="chain" id="PRO_0000213357" description="UDP-N-acetylglucosamine transporter">
    <location>
        <begin position="1"/>
        <end position="325"/>
    </location>
</feature>
<feature type="transmembrane region" description="Helical" evidence="1">
    <location>
        <begin position="8"/>
        <end position="24"/>
    </location>
</feature>
<feature type="transmembrane region" description="Helical" evidence="1">
    <location>
        <begin position="42"/>
        <end position="58"/>
    </location>
</feature>
<feature type="transmembrane region" description="Helical" evidence="1">
    <location>
        <begin position="138"/>
        <end position="154"/>
    </location>
</feature>
<feature type="transmembrane region" description="Helical" evidence="1">
    <location>
        <begin position="173"/>
        <end position="189"/>
    </location>
</feature>
<feature type="transmembrane region" description="Helical" evidence="1">
    <location>
        <begin position="209"/>
        <end position="225"/>
    </location>
</feature>
<feature type="transmembrane region" description="Helical" evidence="1">
    <location>
        <begin position="246"/>
        <end position="262"/>
    </location>
</feature>
<feature type="transmembrane region" description="Helical" evidence="1">
    <location>
        <begin position="268"/>
        <end position="284"/>
    </location>
</feature>
<feature type="transmembrane region" description="Helical" evidence="1">
    <location>
        <begin position="295"/>
        <end position="311"/>
    </location>
</feature>
<feature type="splice variant" id="VSP_012786" description="In isoform 2." evidence="11">
    <original>M</original>
    <variation>MSSRSVLSPVVGTDAPDQHLELKKPQELKEMERLPLANEDKTM</variation>
    <location>
        <position position="1"/>
    </location>
</feature>
<feature type="splice variant" id="VSP_054232" description="In isoform 3." evidence="10">
    <original>GFFGSIFGL</original>
    <variation>VSFSLEPSL</variation>
    <location>
        <begin position="212"/>
        <end position="220"/>
    </location>
</feature>
<feature type="splice variant" id="VSP_054233" description="In isoform 3." evidence="10">
    <location>
        <begin position="221"/>
        <end position="325"/>
    </location>
</feature>
<feature type="sequence variant" id="VAR_087691" description="In AMRS." evidence="7">
    <original>R</original>
    <variation>C</variation>
    <location>
        <position position="25"/>
    </location>
</feature>
<accession>Q9Y2D2</accession>
<accession>A8K3F8</accession>
<accession>D3DT54</accession>
<accession>Q68CR2</accession>
<accession>Q9BSB7</accession>
<protein>
    <recommendedName>
        <fullName>UDP-N-acetylglucosamine transporter</fullName>
    </recommendedName>
    <alternativeName>
        <fullName>Golgi UDP-GlcNAc transporter</fullName>
    </alternativeName>
    <alternativeName>
        <fullName>Solute carrier family 35 member A3</fullName>
    </alternativeName>
</protein>
<evidence type="ECO:0000255" key="1"/>
<evidence type="ECO:0000269" key="2">
    <source>
    </source>
</evidence>
<evidence type="ECO:0000269" key="3">
    <source>
    </source>
</evidence>
<evidence type="ECO:0000269" key="4">
    <source>
    </source>
</evidence>
<evidence type="ECO:0000269" key="5">
    <source>
    </source>
</evidence>
<evidence type="ECO:0000269" key="6">
    <source>
    </source>
</evidence>
<evidence type="ECO:0000269" key="7">
    <source>
    </source>
</evidence>
<evidence type="ECO:0000269" key="8">
    <source>
    </source>
</evidence>
<evidence type="ECO:0000269" key="9">
    <source>
    </source>
</evidence>
<evidence type="ECO:0000303" key="10">
    <source>
    </source>
</evidence>
<evidence type="ECO:0000303" key="11">
    <source>
    </source>
</evidence>
<evidence type="ECO:0000305" key="12"/>
<keyword id="KW-0025">Alternative splicing</keyword>
<keyword id="KW-0050">Antiport</keyword>
<keyword id="KW-1268">Autism spectrum disorder</keyword>
<keyword id="KW-0225">Disease variant</keyword>
<keyword id="KW-0887">Epilepsy</keyword>
<keyword id="KW-0333">Golgi apparatus</keyword>
<keyword id="KW-0991">Intellectual disability</keyword>
<keyword id="KW-0472">Membrane</keyword>
<keyword id="KW-1267">Proteomics identification</keyword>
<keyword id="KW-1185">Reference proteome</keyword>
<keyword id="KW-0762">Sugar transport</keyword>
<keyword id="KW-0812">Transmembrane</keyword>
<keyword id="KW-1133">Transmembrane helix</keyword>
<keyword id="KW-0813">Transport</keyword>
<proteinExistence type="evidence at protein level"/>
<reference key="1">
    <citation type="journal article" date="1999" name="J. Biochem.">
        <title>Molecular cloning and functional expression of the human Golgi UDP-N-acetylglucosamine transporter.</title>
        <authorList>
            <person name="Ishida N."/>
            <person name="Yoshioka S."/>
            <person name="Chiba Y."/>
            <person name="Takeuchi M."/>
            <person name="Kawakita M."/>
        </authorList>
    </citation>
    <scope>NUCLEOTIDE SEQUENCE [MRNA] (ISOFORM 1)</scope>
    <scope>FUNCTION</scope>
    <scope>TRANSPORTER ACTIVITY</scope>
    <scope>SUBCELLULAR LOCATION</scope>
</reference>
<reference key="2">
    <citation type="journal article" date="2004" name="Nat. Genet.">
        <title>Complete sequencing and characterization of 21,243 full-length human cDNAs.</title>
        <authorList>
            <person name="Ota T."/>
            <person name="Suzuki Y."/>
            <person name="Nishikawa T."/>
            <person name="Otsuki T."/>
            <person name="Sugiyama T."/>
            <person name="Irie R."/>
            <person name="Wakamatsu A."/>
            <person name="Hayashi K."/>
            <person name="Sato H."/>
            <person name="Nagai K."/>
            <person name="Kimura K."/>
            <person name="Makita H."/>
            <person name="Sekine M."/>
            <person name="Obayashi M."/>
            <person name="Nishi T."/>
            <person name="Shibahara T."/>
            <person name="Tanaka T."/>
            <person name="Ishii S."/>
            <person name="Yamamoto J."/>
            <person name="Saito K."/>
            <person name="Kawai Y."/>
            <person name="Isono Y."/>
            <person name="Nakamura Y."/>
            <person name="Nagahari K."/>
            <person name="Murakami K."/>
            <person name="Yasuda T."/>
            <person name="Iwayanagi T."/>
            <person name="Wagatsuma M."/>
            <person name="Shiratori A."/>
            <person name="Sudo H."/>
            <person name="Hosoiri T."/>
            <person name="Kaku Y."/>
            <person name="Kodaira H."/>
            <person name="Kondo H."/>
            <person name="Sugawara M."/>
            <person name="Takahashi M."/>
            <person name="Kanda K."/>
            <person name="Yokoi T."/>
            <person name="Furuya T."/>
            <person name="Kikkawa E."/>
            <person name="Omura Y."/>
            <person name="Abe K."/>
            <person name="Kamihara K."/>
            <person name="Katsuta N."/>
            <person name="Sato K."/>
            <person name="Tanikawa M."/>
            <person name="Yamazaki M."/>
            <person name="Ninomiya K."/>
            <person name="Ishibashi T."/>
            <person name="Yamashita H."/>
            <person name="Murakawa K."/>
            <person name="Fujimori K."/>
            <person name="Tanai H."/>
            <person name="Kimata M."/>
            <person name="Watanabe M."/>
            <person name="Hiraoka S."/>
            <person name="Chiba Y."/>
            <person name="Ishida S."/>
            <person name="Ono Y."/>
            <person name="Takiguchi S."/>
            <person name="Watanabe S."/>
            <person name="Yosida M."/>
            <person name="Hotuta T."/>
            <person name="Kusano J."/>
            <person name="Kanehori K."/>
            <person name="Takahashi-Fujii A."/>
            <person name="Hara H."/>
            <person name="Tanase T.-O."/>
            <person name="Nomura Y."/>
            <person name="Togiya S."/>
            <person name="Komai F."/>
            <person name="Hara R."/>
            <person name="Takeuchi K."/>
            <person name="Arita M."/>
            <person name="Imose N."/>
            <person name="Musashino K."/>
            <person name="Yuuki H."/>
            <person name="Oshima A."/>
            <person name="Sasaki N."/>
            <person name="Aotsuka S."/>
            <person name="Yoshikawa Y."/>
            <person name="Matsunawa H."/>
            <person name="Ichihara T."/>
            <person name="Shiohata N."/>
            <person name="Sano S."/>
            <person name="Moriya S."/>
            <person name="Momiyama H."/>
            <person name="Satoh N."/>
            <person name="Takami S."/>
            <person name="Terashima Y."/>
            <person name="Suzuki O."/>
            <person name="Nakagawa S."/>
            <person name="Senoh A."/>
            <person name="Mizoguchi H."/>
            <person name="Goto Y."/>
            <person name="Shimizu F."/>
            <person name="Wakebe H."/>
            <person name="Hishigaki H."/>
            <person name="Watanabe T."/>
            <person name="Sugiyama A."/>
            <person name="Takemoto M."/>
            <person name="Kawakami B."/>
            <person name="Yamazaki M."/>
            <person name="Watanabe K."/>
            <person name="Kumagai A."/>
            <person name="Itakura S."/>
            <person name="Fukuzumi Y."/>
            <person name="Fujimori Y."/>
            <person name="Komiyama M."/>
            <person name="Tashiro H."/>
            <person name="Tanigami A."/>
            <person name="Fujiwara T."/>
            <person name="Ono T."/>
            <person name="Yamada K."/>
            <person name="Fujii Y."/>
            <person name="Ozaki K."/>
            <person name="Hirao M."/>
            <person name="Ohmori Y."/>
            <person name="Kawabata A."/>
            <person name="Hikiji T."/>
            <person name="Kobatake N."/>
            <person name="Inagaki H."/>
            <person name="Ikema Y."/>
            <person name="Okamoto S."/>
            <person name="Okitani R."/>
            <person name="Kawakami T."/>
            <person name="Noguchi S."/>
            <person name="Itoh T."/>
            <person name="Shigeta K."/>
            <person name="Senba T."/>
            <person name="Matsumura K."/>
            <person name="Nakajima Y."/>
            <person name="Mizuno T."/>
            <person name="Morinaga M."/>
            <person name="Sasaki M."/>
            <person name="Togashi T."/>
            <person name="Oyama M."/>
            <person name="Hata H."/>
            <person name="Watanabe M."/>
            <person name="Komatsu T."/>
            <person name="Mizushima-Sugano J."/>
            <person name="Satoh T."/>
            <person name="Shirai Y."/>
            <person name="Takahashi Y."/>
            <person name="Nakagawa K."/>
            <person name="Okumura K."/>
            <person name="Nagase T."/>
            <person name="Nomura N."/>
            <person name="Kikuchi H."/>
            <person name="Masuho Y."/>
            <person name="Yamashita R."/>
            <person name="Nakai K."/>
            <person name="Yada T."/>
            <person name="Nakamura Y."/>
            <person name="Ohara O."/>
            <person name="Isogai T."/>
            <person name="Sugano S."/>
        </authorList>
    </citation>
    <scope>NUCLEOTIDE SEQUENCE [LARGE SCALE MRNA] (ISOFORM 1)</scope>
</reference>
<reference key="3">
    <citation type="journal article" date="2007" name="BMC Genomics">
        <title>The full-ORF clone resource of the German cDNA consortium.</title>
        <authorList>
            <person name="Bechtel S."/>
            <person name="Rosenfelder H."/>
            <person name="Duda A."/>
            <person name="Schmidt C.P."/>
            <person name="Ernst U."/>
            <person name="Wellenreuther R."/>
            <person name="Mehrle A."/>
            <person name="Schuster C."/>
            <person name="Bahr A."/>
            <person name="Bloecker H."/>
            <person name="Heubner D."/>
            <person name="Hoerlein A."/>
            <person name="Michel G."/>
            <person name="Wedler H."/>
            <person name="Koehrer K."/>
            <person name="Ottenwaelder B."/>
            <person name="Poustka A."/>
            <person name="Wiemann S."/>
            <person name="Schupp I."/>
        </authorList>
    </citation>
    <scope>NUCLEOTIDE SEQUENCE [LARGE SCALE MRNA] (ISOFORM 2)</scope>
    <source>
        <tissue>Colon carcinoma</tissue>
    </source>
</reference>
<reference key="4">
    <citation type="journal article" date="2006" name="Nature">
        <title>The DNA sequence and biological annotation of human chromosome 1.</title>
        <authorList>
            <person name="Gregory S.G."/>
            <person name="Barlow K.F."/>
            <person name="McLay K.E."/>
            <person name="Kaul R."/>
            <person name="Swarbreck D."/>
            <person name="Dunham A."/>
            <person name="Scott C.E."/>
            <person name="Howe K.L."/>
            <person name="Woodfine K."/>
            <person name="Spencer C.C.A."/>
            <person name="Jones M.C."/>
            <person name="Gillson C."/>
            <person name="Searle S."/>
            <person name="Zhou Y."/>
            <person name="Kokocinski F."/>
            <person name="McDonald L."/>
            <person name="Evans R."/>
            <person name="Phillips K."/>
            <person name="Atkinson A."/>
            <person name="Cooper R."/>
            <person name="Jones C."/>
            <person name="Hall R.E."/>
            <person name="Andrews T.D."/>
            <person name="Lloyd C."/>
            <person name="Ainscough R."/>
            <person name="Almeida J.P."/>
            <person name="Ambrose K.D."/>
            <person name="Anderson F."/>
            <person name="Andrew R.W."/>
            <person name="Ashwell R.I.S."/>
            <person name="Aubin K."/>
            <person name="Babbage A.K."/>
            <person name="Bagguley C.L."/>
            <person name="Bailey J."/>
            <person name="Beasley H."/>
            <person name="Bethel G."/>
            <person name="Bird C.P."/>
            <person name="Bray-Allen S."/>
            <person name="Brown J.Y."/>
            <person name="Brown A.J."/>
            <person name="Buckley D."/>
            <person name="Burton J."/>
            <person name="Bye J."/>
            <person name="Carder C."/>
            <person name="Chapman J.C."/>
            <person name="Clark S.Y."/>
            <person name="Clarke G."/>
            <person name="Clee C."/>
            <person name="Cobley V."/>
            <person name="Collier R.E."/>
            <person name="Corby N."/>
            <person name="Coville G.J."/>
            <person name="Davies J."/>
            <person name="Deadman R."/>
            <person name="Dunn M."/>
            <person name="Earthrowl M."/>
            <person name="Ellington A.G."/>
            <person name="Errington H."/>
            <person name="Frankish A."/>
            <person name="Frankland J."/>
            <person name="French L."/>
            <person name="Garner P."/>
            <person name="Garnett J."/>
            <person name="Gay L."/>
            <person name="Ghori M.R.J."/>
            <person name="Gibson R."/>
            <person name="Gilby L.M."/>
            <person name="Gillett W."/>
            <person name="Glithero R.J."/>
            <person name="Grafham D.V."/>
            <person name="Griffiths C."/>
            <person name="Griffiths-Jones S."/>
            <person name="Grocock R."/>
            <person name="Hammond S."/>
            <person name="Harrison E.S.I."/>
            <person name="Hart E."/>
            <person name="Haugen E."/>
            <person name="Heath P.D."/>
            <person name="Holmes S."/>
            <person name="Holt K."/>
            <person name="Howden P.J."/>
            <person name="Hunt A.R."/>
            <person name="Hunt S.E."/>
            <person name="Hunter G."/>
            <person name="Isherwood J."/>
            <person name="James R."/>
            <person name="Johnson C."/>
            <person name="Johnson D."/>
            <person name="Joy A."/>
            <person name="Kay M."/>
            <person name="Kershaw J.K."/>
            <person name="Kibukawa M."/>
            <person name="Kimberley A.M."/>
            <person name="King A."/>
            <person name="Knights A.J."/>
            <person name="Lad H."/>
            <person name="Laird G."/>
            <person name="Lawlor S."/>
            <person name="Leongamornlert D.A."/>
            <person name="Lloyd D.M."/>
            <person name="Loveland J."/>
            <person name="Lovell J."/>
            <person name="Lush M.J."/>
            <person name="Lyne R."/>
            <person name="Martin S."/>
            <person name="Mashreghi-Mohammadi M."/>
            <person name="Matthews L."/>
            <person name="Matthews N.S.W."/>
            <person name="McLaren S."/>
            <person name="Milne S."/>
            <person name="Mistry S."/>
            <person name="Moore M.J.F."/>
            <person name="Nickerson T."/>
            <person name="O'Dell C.N."/>
            <person name="Oliver K."/>
            <person name="Palmeiri A."/>
            <person name="Palmer S.A."/>
            <person name="Parker A."/>
            <person name="Patel D."/>
            <person name="Pearce A.V."/>
            <person name="Peck A.I."/>
            <person name="Pelan S."/>
            <person name="Phelps K."/>
            <person name="Phillimore B.J."/>
            <person name="Plumb R."/>
            <person name="Rajan J."/>
            <person name="Raymond C."/>
            <person name="Rouse G."/>
            <person name="Saenphimmachak C."/>
            <person name="Sehra H.K."/>
            <person name="Sheridan E."/>
            <person name="Shownkeen R."/>
            <person name="Sims S."/>
            <person name="Skuce C.D."/>
            <person name="Smith M."/>
            <person name="Steward C."/>
            <person name="Subramanian S."/>
            <person name="Sycamore N."/>
            <person name="Tracey A."/>
            <person name="Tromans A."/>
            <person name="Van Helmond Z."/>
            <person name="Wall M."/>
            <person name="Wallis J.M."/>
            <person name="White S."/>
            <person name="Whitehead S.L."/>
            <person name="Wilkinson J.E."/>
            <person name="Willey D.L."/>
            <person name="Williams H."/>
            <person name="Wilming L."/>
            <person name="Wray P.W."/>
            <person name="Wu Z."/>
            <person name="Coulson A."/>
            <person name="Vaudin M."/>
            <person name="Sulston J.E."/>
            <person name="Durbin R.M."/>
            <person name="Hubbard T."/>
            <person name="Wooster R."/>
            <person name="Dunham I."/>
            <person name="Carter N.P."/>
            <person name="McVean G."/>
            <person name="Ross M.T."/>
            <person name="Harrow J."/>
            <person name="Olson M.V."/>
            <person name="Beck S."/>
            <person name="Rogers J."/>
            <person name="Bentley D.R."/>
        </authorList>
    </citation>
    <scope>NUCLEOTIDE SEQUENCE [LARGE SCALE GENOMIC DNA]</scope>
</reference>
<reference key="5">
    <citation type="submission" date="2005-09" db="EMBL/GenBank/DDBJ databases">
        <authorList>
            <person name="Mural R.J."/>
            <person name="Istrail S."/>
            <person name="Sutton G.G."/>
            <person name="Florea L."/>
            <person name="Halpern A.L."/>
            <person name="Mobarry C.M."/>
            <person name="Lippert R."/>
            <person name="Walenz B."/>
            <person name="Shatkay H."/>
            <person name="Dew I."/>
            <person name="Miller J.R."/>
            <person name="Flanigan M.J."/>
            <person name="Edwards N.J."/>
            <person name="Bolanos R."/>
            <person name="Fasulo D."/>
            <person name="Halldorsson B.V."/>
            <person name="Hannenhalli S."/>
            <person name="Turner R."/>
            <person name="Yooseph S."/>
            <person name="Lu F."/>
            <person name="Nusskern D.R."/>
            <person name="Shue B.C."/>
            <person name="Zheng X.H."/>
            <person name="Zhong F."/>
            <person name="Delcher A.L."/>
            <person name="Huson D.H."/>
            <person name="Kravitz S.A."/>
            <person name="Mouchard L."/>
            <person name="Reinert K."/>
            <person name="Remington K.A."/>
            <person name="Clark A.G."/>
            <person name="Waterman M.S."/>
            <person name="Eichler E.E."/>
            <person name="Adams M.D."/>
            <person name="Hunkapiller M.W."/>
            <person name="Myers E.W."/>
            <person name="Venter J.C."/>
        </authorList>
    </citation>
    <scope>NUCLEOTIDE SEQUENCE [LARGE SCALE GENOMIC DNA]</scope>
</reference>
<reference key="6">
    <citation type="journal article" date="2004" name="Genome Res.">
        <title>The status, quality, and expansion of the NIH full-length cDNA project: the Mammalian Gene Collection (MGC).</title>
        <authorList>
            <consortium name="The MGC Project Team"/>
        </authorList>
    </citation>
    <scope>NUCLEOTIDE SEQUENCE [LARGE SCALE MRNA] (ISOFORM 3)</scope>
    <source>
        <tissue>Placenta</tissue>
    </source>
</reference>
<reference key="7">
    <citation type="journal article" date="2012" name="FEBS Lett.">
        <title>UDP-N-acetylglucosamine transporter and UDP-galactose transporter form heterologous complexes in the Golgi membrane.</title>
        <authorList>
            <person name="Maszczak-Seneczko D."/>
            <person name="Sosicka P."/>
            <person name="Majkowski M."/>
            <person name="Olczak T."/>
            <person name="Olczak M."/>
        </authorList>
    </citation>
    <scope>INTERACTION WITH SLC35A2</scope>
</reference>
<reference key="8">
    <citation type="journal article" date="2013" name="J. Biol. Chem.">
        <title>UDP-N-acetylglucosamine transporter (SLC35A3) regulates biosynthesis of highly branched N-glycans and keratan sulfate.</title>
        <authorList>
            <person name="Maszczak-Seneczko D."/>
            <person name="Sosicka P."/>
            <person name="Olczak T."/>
            <person name="Jakimowicz P."/>
            <person name="Majkowski M."/>
            <person name="Olczak M."/>
        </authorList>
    </citation>
    <scope>SUBCELLULAR LOCATION</scope>
    <scope>FUNCTION</scope>
</reference>
<reference key="9">
    <citation type="journal article" date="2017" name="Biochim. Biophys. Acta">
        <title>An insight into the orphan nucleotide sugar transporter SLC35A4.</title>
        <authorList>
            <person name="Sosicka P."/>
            <person name="Maszczak-Seneczko D."/>
            <person name="Bazan B."/>
            <person name="Shauchuk Y."/>
            <person name="Kaczmarek B."/>
            <person name="Olczak M."/>
        </authorList>
    </citation>
    <scope>INTERACTION WITH SLC35A2</scope>
    <scope>IDENTIFICATION IN A COMPLEX WITH SLC35A2 AND SLC35A4</scope>
    <scope>SUBCELLULAR LOCATION</scope>
</reference>
<reference key="10">
    <citation type="journal article" date="2013" name="J. Med. Genet.">
        <title>Mutations in SLC35A3 cause autism spectrum disorder, epilepsy and arthrogryposis.</title>
        <authorList>
            <person name="Edvardson S."/>
            <person name="Ashikov A."/>
            <person name="Jalas C."/>
            <person name="Sturiale L."/>
            <person name="Shaag A."/>
            <person name="Fedick A."/>
            <person name="Treff N.R."/>
            <person name="Garozzo D."/>
            <person name="Gerardy-Schahn R."/>
            <person name="Elpeleg O."/>
        </authorList>
    </citation>
    <scope>INVOLVEMENT IN AMRS</scope>
</reference>
<reference key="11">
    <citation type="journal article" date="2017" name="Am. J. Med. Genet. A">
        <title>Recessive mutations in SLC35A3 cause early onset epileptic encephalopathy with skeletal defects.</title>
        <authorList>
            <consortium name="EuroEPINOMICS consortium AR working group"/>
            <person name="Marini C."/>
            <person name="Hardies K."/>
            <person name="Pisano T."/>
            <person name="May P."/>
            <person name="Weckhuysen S."/>
            <person name="Cellini E."/>
            <person name="Suls A."/>
            <person name="Mei D."/>
            <person name="Balling R."/>
            <person name="Jonghe P.D."/>
            <person name="Helbig I."/>
            <person name="Garozzo D."/>
            <person name="Guerrini R."/>
        </authorList>
    </citation>
    <scope>VARIANT AMRS CYS-25</scope>
</reference>
<reference key="12">
    <citation type="journal article" date="2020" name="J. Biol. Chem.">
        <title>Biosynthesis of GlcNAc-rich N- and O-glycans in the Golgi apparatus does not require the nucleotide sugar transporter SLC35A3.</title>
        <authorList>
            <person name="Szulc B."/>
            <person name="Sosicka P."/>
            <person name="Maszczak-Seneczko D."/>
            <person name="Skurska E."/>
            <person name="Shauchuk A."/>
            <person name="Olczak T."/>
            <person name="Freeze H.H."/>
            <person name="Olczak M."/>
        </authorList>
    </citation>
    <scope>FUNCTION</scope>
</reference>
<reference key="13">
    <citation type="journal article" date="2022" name="FASEB J.">
        <title>O-GlcNAcylation regulates beta1,4-GlcNAc-branched N-glycan biosynthesis via the OGT/SLC35A3/GnT-IV axis.</title>
        <authorList>
            <person name="Song W."/>
            <person name="Isaji T."/>
            <person name="Nakano M."/>
            <person name="Liang C."/>
            <person name="Fukuda T."/>
            <person name="Gu J."/>
        </authorList>
    </citation>
    <scope>INTERACTION WITH MGAT4B</scope>
    <scope>O-GLCNACYLATION</scope>
    <scope>FUNCTION</scope>
</reference>